<feature type="chain" id="PRO_0000071459" description="Serine/threonine-protein phosphatase 2A 56 kDa regulatory subunit gamma isoform">
    <location>
        <begin position="1"/>
        <end position="524"/>
    </location>
</feature>
<feature type="region of interest" description="Disordered" evidence="4">
    <location>
        <begin position="476"/>
        <end position="524"/>
    </location>
</feature>
<feature type="short sequence motif" description="Nuclear localization signal" evidence="3">
    <location>
        <begin position="472"/>
        <end position="489"/>
    </location>
</feature>
<feature type="modified residue" description="N-acetylmethionine" evidence="2">
    <location>
        <position position="1"/>
    </location>
</feature>
<feature type="splice variant" id="VSP_005116" description="In isoform Gamma-1." evidence="5">
    <original>YSLCSHASTVSMPLAMETDGPLFEDVQMLRKTVSDEARQAQKDPKKERPLARRKSELPQDPHTKKALEAHCRADELVPQDGR</original>
    <variation>VLKKRAI</variation>
    <location>
        <begin position="443"/>
        <end position="524"/>
    </location>
</feature>
<feature type="splice variant" id="VSP_005114" description="In isoform Gamma-4." evidence="5">
    <original>AQKDPKKERPLARRKSELPQDPHTKKALEAHCRADELVPQDGR</original>
    <variation>QLVGRKAVSSTQVRKV</variation>
    <location>
        <begin position="482"/>
        <end position="524"/>
    </location>
</feature>
<feature type="splice variant" id="VSP_005115" description="In isoform Gamma-5." evidence="5">
    <original>AQKDPKKERPLARRKSELPQDPHTKKALEAHCRADELVPQDGR</original>
    <variation>VKVPG</variation>
    <location>
        <begin position="482"/>
        <end position="524"/>
    </location>
</feature>
<sequence length="524" mass="60985">MLTCNKAGSRMVVDAASSNGPFQPVALLHIRDVPPADQEKLFIQKLRQCCVLFDFVSDPLSDLKWKEVKRAALSEMVEYITHNRNVITEPIYPEVVHMFAVNMFRTLPPSSNPTGAEFDPEEDEPTLEAAWPHLQLVYEFFLRFLESPDFQPNIAKKYIDQKFVLQLLELFDSEDPRERDFLKTTLHRIYGKFLGLRAYIRKQINNIFYRFIYETEHHNGIAELLEILGSIINGFALPLKEEHKIFLLKVLLPLHKVKSLSVYHPQLAYCVVQFLEKDSTLTEPVVMALLKYWPKTHSPKEVMFLNELEEILDVIEPSEFVKIMEPLFRQLAKCVSSPHFQVAERALYYWNNEYIMSLISDNAAKILPIMFPSLYRNSKTHWNKTIHGLIYNALKLFMEMNQKLFDDCTQQFKAEKLKEKLKMKEREEAWVKIENLAKANPQYSLCSHASTVSMPLAMETDGPLFEDVQMLRKTVSDEARQAQKDPKKERPLARRKSELPQDPHTKKALEAHCRADELVPQDGR</sequence>
<organism>
    <name type="scientific">Oryctolagus cuniculus</name>
    <name type="common">Rabbit</name>
    <dbReference type="NCBI Taxonomy" id="9986"/>
    <lineage>
        <taxon>Eukaryota</taxon>
        <taxon>Metazoa</taxon>
        <taxon>Chordata</taxon>
        <taxon>Craniata</taxon>
        <taxon>Vertebrata</taxon>
        <taxon>Euteleostomi</taxon>
        <taxon>Mammalia</taxon>
        <taxon>Eutheria</taxon>
        <taxon>Euarchontoglires</taxon>
        <taxon>Glires</taxon>
        <taxon>Lagomorpha</taxon>
        <taxon>Leporidae</taxon>
        <taxon>Oryctolagus</taxon>
    </lineage>
</organism>
<dbReference type="EMBL" id="U38191">
    <property type="protein sequence ID" value="AAC48530.1"/>
    <property type="molecule type" value="mRNA"/>
</dbReference>
<dbReference type="EMBL" id="U37770">
    <property type="protein sequence ID" value="AAC48528.1"/>
    <property type="molecule type" value="mRNA"/>
</dbReference>
<dbReference type="EMBL" id="U38190">
    <property type="protein sequence ID" value="AAC48529.1"/>
    <property type="molecule type" value="mRNA"/>
</dbReference>
<dbReference type="EMBL" id="U38192">
    <property type="protein sequence ID" value="AAC48531.1"/>
    <property type="molecule type" value="mRNA"/>
</dbReference>
<dbReference type="RefSeq" id="NP_001075833.1">
    <molecule id="Q28651-1"/>
    <property type="nucleotide sequence ID" value="NM_001082364.1"/>
</dbReference>
<dbReference type="RefSeq" id="XP_051690764.1">
    <molecule id="Q28651-3"/>
    <property type="nucleotide sequence ID" value="XM_051834804.2"/>
</dbReference>
<dbReference type="RefSeq" id="XP_069921127.1">
    <molecule id="Q28651-3"/>
    <property type="nucleotide sequence ID" value="XM_070065026.1"/>
</dbReference>
<dbReference type="SMR" id="Q28651"/>
<dbReference type="FunCoup" id="Q28651">
    <property type="interactions" value="3429"/>
</dbReference>
<dbReference type="STRING" id="9986.ENSOCUP00000028766"/>
<dbReference type="PaxDb" id="9986-ENSOCUP00000023817"/>
<dbReference type="Ensembl" id="ENSOCUT00000053898.1">
    <molecule id="Q28651-3"/>
    <property type="protein sequence ID" value="ENSOCUP00000036260.1"/>
    <property type="gene ID" value="ENSOCUG00000011221.4"/>
</dbReference>
<dbReference type="GeneID" id="100009216"/>
<dbReference type="KEGG" id="ocu:100009216"/>
<dbReference type="CTD" id="5527"/>
<dbReference type="eggNOG" id="KOG2085">
    <property type="taxonomic scope" value="Eukaryota"/>
</dbReference>
<dbReference type="GeneTree" id="ENSGT01030000234620"/>
<dbReference type="InParanoid" id="Q28651"/>
<dbReference type="OrthoDB" id="10264446at2759"/>
<dbReference type="Proteomes" id="UP000001811">
    <property type="component" value="Unplaced"/>
</dbReference>
<dbReference type="Bgee" id="ENSOCUG00000011221">
    <property type="expression patterns" value="Expressed in autopod skin and 17 other cell types or tissues"/>
</dbReference>
<dbReference type="GO" id="GO:0000775">
    <property type="term" value="C:chromosome, centromeric region"/>
    <property type="evidence" value="ECO:0000250"/>
    <property type="project" value="UniProtKB"/>
</dbReference>
<dbReference type="GO" id="GO:0005829">
    <property type="term" value="C:cytosol"/>
    <property type="evidence" value="ECO:0007669"/>
    <property type="project" value="TreeGrafter"/>
</dbReference>
<dbReference type="GO" id="GO:0005634">
    <property type="term" value="C:nucleus"/>
    <property type="evidence" value="ECO:0007669"/>
    <property type="project" value="UniProtKB-SubCell"/>
</dbReference>
<dbReference type="GO" id="GO:0000159">
    <property type="term" value="C:protein phosphatase type 2A complex"/>
    <property type="evidence" value="ECO:0000250"/>
    <property type="project" value="UniProtKB"/>
</dbReference>
<dbReference type="GO" id="GO:0072542">
    <property type="term" value="F:protein phosphatase activator activity"/>
    <property type="evidence" value="ECO:0007669"/>
    <property type="project" value="TreeGrafter"/>
</dbReference>
<dbReference type="GO" id="GO:0007165">
    <property type="term" value="P:signal transduction"/>
    <property type="evidence" value="ECO:0007669"/>
    <property type="project" value="InterPro"/>
</dbReference>
<dbReference type="FunFam" id="1.25.10.10:FF:000003">
    <property type="entry name" value="Serine/threonine-protein phosphatase 2A 56 kDa regulatory subunit"/>
    <property type="match status" value="1"/>
</dbReference>
<dbReference type="Gene3D" id="1.25.10.10">
    <property type="entry name" value="Leucine-rich Repeat Variant"/>
    <property type="match status" value="1"/>
</dbReference>
<dbReference type="InterPro" id="IPR011989">
    <property type="entry name" value="ARM-like"/>
</dbReference>
<dbReference type="InterPro" id="IPR016024">
    <property type="entry name" value="ARM-type_fold"/>
</dbReference>
<dbReference type="InterPro" id="IPR002554">
    <property type="entry name" value="PP2A_B56"/>
</dbReference>
<dbReference type="PANTHER" id="PTHR10257">
    <property type="entry name" value="SERINE/THREONINE PROTEIN PHOSPHATASE 2A PP2A REGULATORY SUBUNIT B"/>
    <property type="match status" value="1"/>
</dbReference>
<dbReference type="PANTHER" id="PTHR10257:SF3">
    <property type="entry name" value="SERINE_THREONINE-PROTEIN PHOSPHATASE 2A 56 KDA REGULATORY SUBUNIT GAMMA ISOFORM"/>
    <property type="match status" value="1"/>
</dbReference>
<dbReference type="Pfam" id="PF01603">
    <property type="entry name" value="B56"/>
    <property type="match status" value="1"/>
</dbReference>
<dbReference type="PIRSF" id="PIRSF028043">
    <property type="entry name" value="PP2A_B56"/>
    <property type="match status" value="1"/>
</dbReference>
<dbReference type="SUPFAM" id="SSF48371">
    <property type="entry name" value="ARM repeat"/>
    <property type="match status" value="1"/>
</dbReference>
<gene>
    <name type="primary">PPP2R5C</name>
</gene>
<proteinExistence type="evidence at transcript level"/>
<keyword id="KW-0007">Acetylation</keyword>
<keyword id="KW-0025">Alternative splicing</keyword>
<keyword id="KW-0137">Centromere</keyword>
<keyword id="KW-0158">Chromosome</keyword>
<keyword id="KW-0539">Nucleus</keyword>
<keyword id="KW-1185">Reference proteome</keyword>
<name>2A5G_RABIT</name>
<reference key="1">
    <citation type="journal article" date="1996" name="J. Biol. Chem.">
        <title>High complexity in the expression of the B' subunit of protein phosphatase 2A0. Evidence for the existence of at least seven novel isoforms.</title>
        <authorList>
            <person name="Csortos C."/>
            <person name="Zolnierowicz S."/>
            <person name="Bako E."/>
            <person name="Durbin S.D."/>
            <person name="Depaoli-Roach A.A."/>
        </authorList>
    </citation>
    <scope>NUCLEOTIDE SEQUENCE [MRNA] (ISOFORMS GAMMA-1; GAMMA-3; GAMMA-4 AND GAMMA-5)</scope>
    <source>
        <strain>New Zealand</strain>
        <tissue>Skeletal muscle</tissue>
    </source>
</reference>
<evidence type="ECO:0000250" key="1"/>
<evidence type="ECO:0000250" key="2">
    <source>
        <dbReference type="UniProtKB" id="Q13362"/>
    </source>
</evidence>
<evidence type="ECO:0000255" key="3"/>
<evidence type="ECO:0000256" key="4">
    <source>
        <dbReference type="SAM" id="MobiDB-lite"/>
    </source>
</evidence>
<evidence type="ECO:0000303" key="5">
    <source>
    </source>
</evidence>
<evidence type="ECO:0000305" key="6"/>
<protein>
    <recommendedName>
        <fullName>Serine/threonine-protein phosphatase 2A 56 kDa regulatory subunit gamma isoform</fullName>
    </recommendedName>
    <alternativeName>
        <fullName>PP2A B subunit isoform B'-beta</fullName>
    </alternativeName>
    <alternativeName>
        <fullName>PP2A B subunit isoform B'-gamma</fullName>
    </alternativeName>
    <alternativeName>
        <fullName>PP2A B subunit isoform B56-gamma</fullName>
    </alternativeName>
    <alternativeName>
        <fullName>PP2A B subunit isoform PR61-gamma</fullName>
    </alternativeName>
    <alternativeName>
        <fullName>PP2A B subunit isoform R5-gamma</fullName>
    </alternativeName>
</protein>
<comment type="function">
    <text evidence="1">The B regulatory subunit might modulate substrate selectivity and catalytic activity, and might also direct the localization of the catalytic enzyme to a particular subcellular compartment. The PP2A-PPP2R5C holoenzyme may activate TP53 and play a role in DNA damage-induced inhibition of cell proliferation. PP2A-PPP2R5C may also regulate the ERK signaling pathway through ERK dephosphorylation (By similarity).</text>
</comment>
<comment type="subunit">
    <text evidence="2">PP2A consists of a common heterodimeric core enzyme, composed of PPP2CA a 36 kDa catalytic subunit (subunit C) and PPP2R1A a 65 kDa constant regulatory subunit (PR65 or subunit A), that associates with a variety of regulatory subunits. Proteins that associate with the core dimer include three families of regulatory subunits B (the R2/B/PR55/B55, R3/B''/PR72/PR130/PR59 and R5/B'/B56 families), the 48 kDa variable regulatory subunit, viral proteins, and cell signaling molecules. Interacts with SGO1 (By similarity). Interacts with SGO1; the interaction is direct. May interact with TP53 (By similarity). Interacts with IER3 and/or ERK kinases; regulates ERK dephosphorylation (By similarity) Interacts with CIP2A; this interaction stabilizes CIP2A (By similarity).</text>
</comment>
<comment type="subcellular location">
    <subcellularLocation>
        <location evidence="1">Nucleus</location>
    </subcellularLocation>
    <subcellularLocation>
        <location evidence="1">Chromosome</location>
        <location evidence="1">Centromere</location>
    </subcellularLocation>
</comment>
<comment type="alternative products">
    <event type="alternative splicing"/>
    <isoform>
        <id>Q28651-1</id>
        <name>Gamma-3</name>
        <name>Beta-3</name>
        <sequence type="displayed"/>
    </isoform>
    <isoform>
        <id>Q28651-2</id>
        <name>Gamma-1</name>
        <name>Beta-4</name>
        <sequence type="described" ref="VSP_005116"/>
    </isoform>
    <isoform>
        <id>Q28651-3</id>
        <name>Gamma-4</name>
        <name>Beta-1</name>
        <sequence type="described" ref="VSP_005114"/>
    </isoform>
    <isoform>
        <id>Q28651-4</id>
        <name>Gamma-5</name>
        <name>Beta-2</name>
        <sequence type="described" ref="VSP_005115"/>
    </isoform>
</comment>
<comment type="tissue specificity">
    <text>Highly expressed in testis, heart and spleen. Also found in brain and skeletal muscle.</text>
</comment>
<comment type="similarity">
    <text evidence="6">Belongs to the phosphatase 2A regulatory subunit B56 family.</text>
</comment>
<accession>Q28651</accession>
<accession>Q28648</accession>
<accession>Q28650</accession>
<accession>Q28652</accession>